<evidence type="ECO:0000255" key="1">
    <source>
        <dbReference type="HAMAP-Rule" id="MF_01612"/>
    </source>
</evidence>
<evidence type="ECO:0000255" key="2">
    <source>
        <dbReference type="PROSITE-ProRule" id="PRU01266"/>
    </source>
</evidence>
<reference key="1">
    <citation type="journal article" date="2002" name="Proc. Natl. Acad. Sci. U.S.A.">
        <title>The complete genome of hyperthermophile Methanopyrus kandleri AV19 and monophyly of archaeal methanogens.</title>
        <authorList>
            <person name="Slesarev A.I."/>
            <person name="Mezhevaya K.V."/>
            <person name="Makarova K.S."/>
            <person name="Polushin N.N."/>
            <person name="Shcherbinina O.V."/>
            <person name="Shakhova V.V."/>
            <person name="Belova G.I."/>
            <person name="Aravind L."/>
            <person name="Natale D.A."/>
            <person name="Rogozin I.B."/>
            <person name="Tatusov R.L."/>
            <person name="Wolf Y.I."/>
            <person name="Stetter K.O."/>
            <person name="Malykh A.G."/>
            <person name="Koonin E.V."/>
            <person name="Kozyavkin S.A."/>
        </authorList>
    </citation>
    <scope>NUCLEOTIDE SEQUENCE [LARGE SCALE GENOMIC DNA]</scope>
    <source>
        <strain>AV19 / DSM 6324 / JCM 9639 / NBRC 100938</strain>
    </source>
</reference>
<protein>
    <recommendedName>
        <fullName evidence="1">5-amino-6-(D-ribitylamino)uracil--L-tyrosine 4-hydroxyphenyl transferase</fullName>
        <ecNumber evidence="1">2.5.1.147</ecNumber>
    </recommendedName>
    <alternativeName>
        <fullName evidence="1">FO synthase subunit 2</fullName>
    </alternativeName>
</protein>
<organism>
    <name type="scientific">Methanopyrus kandleri (strain AV19 / DSM 6324 / JCM 9639 / NBRC 100938)</name>
    <dbReference type="NCBI Taxonomy" id="190192"/>
    <lineage>
        <taxon>Archaea</taxon>
        <taxon>Methanobacteriati</taxon>
        <taxon>Methanobacteriota</taxon>
        <taxon>Methanomada group</taxon>
        <taxon>Methanopyri</taxon>
        <taxon>Methanopyrales</taxon>
        <taxon>Methanopyraceae</taxon>
        <taxon>Methanopyrus</taxon>
    </lineage>
</organism>
<accession>Q8TWY4</accession>
<name>COFH_METKA</name>
<comment type="function">
    <text evidence="1">Catalyzes the radical-mediated synthesis of 5-amino-5-(4-hydroxybenzyl)-6-(D-ribitylimino)-5,6-dihydrouracil from 5-amino-6-(D-ribitylamino)uracil and L-tyrosine.</text>
</comment>
<comment type="catalytic activity">
    <reaction evidence="1">
        <text>5-amino-6-(D-ribitylamino)uracil + L-tyrosine + S-adenosyl-L-methionine = 5-amino-5-(4-hydroxybenzyl)-6-(D-ribitylimino)-5,6-dihydrouracil + 2-iminoacetate + 5'-deoxyadenosine + L-methionine + H(+)</text>
        <dbReference type="Rhea" id="RHEA:55200"/>
        <dbReference type="ChEBI" id="CHEBI:15378"/>
        <dbReference type="ChEBI" id="CHEBI:15934"/>
        <dbReference type="ChEBI" id="CHEBI:17319"/>
        <dbReference type="ChEBI" id="CHEBI:57844"/>
        <dbReference type="ChEBI" id="CHEBI:58315"/>
        <dbReference type="ChEBI" id="CHEBI:59789"/>
        <dbReference type="ChEBI" id="CHEBI:77846"/>
        <dbReference type="ChEBI" id="CHEBI:85936"/>
        <dbReference type="EC" id="2.5.1.147"/>
    </reaction>
</comment>
<comment type="cofactor">
    <cofactor evidence="1">
        <name>[4Fe-4S] cluster</name>
        <dbReference type="ChEBI" id="CHEBI:49883"/>
    </cofactor>
    <text evidence="1">Binds 1 [4Fe-4S] cluster. The cluster is coordinated with 3 cysteines and an exchangeable S-adenosyl-L-methionine.</text>
</comment>
<comment type="pathway">
    <text evidence="1">Cofactor biosynthesis; coenzyme F0 biosynthesis.</text>
</comment>
<comment type="subunit">
    <text evidence="1">Consists of two subunits, CofG and CofH.</text>
</comment>
<comment type="similarity">
    <text evidence="1">Belongs to the radical SAM superfamily. CofH family.</text>
</comment>
<sequence>MRDSPDEVSVDELVNMAVAGGIDEGTALDALQGKLDPYKVMRAAHEARLKIVGEHVTFVVNRNINFTNVCINRCRFCAFRRDPDDPDAYRMTPEEVGERAAEARDAGATEVCLQGGLHPEATFEYYLEMLDEIKSQAPDIHVHGYSPMEVKYCAKLAGEDIEDVLRELKRAGLDSMPGTAAEIFSPEVRKRLCPDKLEADEWEHIIRIAHELGIPTTCTMMYGHIDSPRDWIDHMKRLRGIQEDTGGFTEFVPLSFVHSNAPIYRRGGARPGVSGMTDVLVHAVARLYFGPLIPNIQASWVKLGVKLAQMTLHAGANDLGGTLMEENISREAGATEGEQLEPEEIVEIIREAGFTPVQRTTLYEPVKVY</sequence>
<gene>
    <name evidence="1" type="primary">cofH</name>
    <name type="ordered locus">MK0897</name>
</gene>
<dbReference type="EC" id="2.5.1.147" evidence="1"/>
<dbReference type="EMBL" id="AE009439">
    <property type="protein sequence ID" value="AAM02110.1"/>
    <property type="molecule type" value="Genomic_DNA"/>
</dbReference>
<dbReference type="RefSeq" id="WP_011019265.1">
    <property type="nucleotide sequence ID" value="NC_003551.1"/>
</dbReference>
<dbReference type="SMR" id="Q8TWY4"/>
<dbReference type="FunCoup" id="Q8TWY4">
    <property type="interactions" value="84"/>
</dbReference>
<dbReference type="STRING" id="190192.MK0897"/>
<dbReference type="PaxDb" id="190192-MK0897"/>
<dbReference type="EnsemblBacteria" id="AAM02110">
    <property type="protein sequence ID" value="AAM02110"/>
    <property type="gene ID" value="MK0897"/>
</dbReference>
<dbReference type="GeneID" id="1476998"/>
<dbReference type="KEGG" id="mka:MK0897"/>
<dbReference type="PATRIC" id="fig|190192.8.peg.939"/>
<dbReference type="HOGENOM" id="CLU_040406_1_0_2"/>
<dbReference type="InParanoid" id="Q8TWY4"/>
<dbReference type="OrthoDB" id="8186at2157"/>
<dbReference type="UniPathway" id="UPA00072"/>
<dbReference type="Proteomes" id="UP000001826">
    <property type="component" value="Chromosome"/>
</dbReference>
<dbReference type="GO" id="GO:0051539">
    <property type="term" value="F:4 iron, 4 sulfur cluster binding"/>
    <property type="evidence" value="ECO:0007669"/>
    <property type="project" value="UniProtKB-KW"/>
</dbReference>
<dbReference type="GO" id="GO:0141093">
    <property type="term" value="F:5-amino-6-(D-ribitylamino)uracil--L-tyrosine 4-hydroxyphenyl transferase activity"/>
    <property type="evidence" value="ECO:0007669"/>
    <property type="project" value="UniProtKB-EC"/>
</dbReference>
<dbReference type="GO" id="GO:0044689">
    <property type="term" value="F:7,8-didemethyl-8-hydroxy-5-deazariboflavin synthase activity"/>
    <property type="evidence" value="ECO:0007669"/>
    <property type="project" value="TreeGrafter"/>
</dbReference>
<dbReference type="GO" id="GO:0005506">
    <property type="term" value="F:iron ion binding"/>
    <property type="evidence" value="ECO:0007669"/>
    <property type="project" value="UniProtKB-UniRule"/>
</dbReference>
<dbReference type="CDD" id="cd01335">
    <property type="entry name" value="Radical_SAM"/>
    <property type="match status" value="1"/>
</dbReference>
<dbReference type="FunFam" id="3.20.20.70:FF:000134">
    <property type="entry name" value="7,8-didemethyl-8-hydroxy-5-deazariboflavin synthase"/>
    <property type="match status" value="1"/>
</dbReference>
<dbReference type="Gene3D" id="3.20.20.70">
    <property type="entry name" value="Aldolase class I"/>
    <property type="match status" value="1"/>
</dbReference>
<dbReference type="HAMAP" id="MF_01612">
    <property type="entry name" value="FO_synth_sub2"/>
    <property type="match status" value="1"/>
</dbReference>
<dbReference type="InterPro" id="IPR013785">
    <property type="entry name" value="Aldolase_TIM"/>
</dbReference>
<dbReference type="InterPro" id="IPR045567">
    <property type="entry name" value="CofH/MnqC-like_C"/>
</dbReference>
<dbReference type="InterPro" id="IPR019940">
    <property type="entry name" value="CofH_family"/>
</dbReference>
<dbReference type="InterPro" id="IPR006638">
    <property type="entry name" value="Elp3/MiaA/NifB-like_rSAM"/>
</dbReference>
<dbReference type="InterPro" id="IPR034405">
    <property type="entry name" value="F420"/>
</dbReference>
<dbReference type="InterPro" id="IPR020050">
    <property type="entry name" value="FO_synthase_su2"/>
</dbReference>
<dbReference type="InterPro" id="IPR007197">
    <property type="entry name" value="rSAM"/>
</dbReference>
<dbReference type="NCBIfam" id="TIGR00423">
    <property type="entry name" value="CofH family radical SAM protein"/>
    <property type="match status" value="1"/>
</dbReference>
<dbReference type="NCBIfam" id="TIGR03551">
    <property type="entry name" value="F420_cofH"/>
    <property type="match status" value="1"/>
</dbReference>
<dbReference type="NCBIfam" id="NF005609">
    <property type="entry name" value="PRK07360.1"/>
    <property type="match status" value="1"/>
</dbReference>
<dbReference type="PANTHER" id="PTHR43076">
    <property type="entry name" value="FO SYNTHASE (COFH)"/>
    <property type="match status" value="1"/>
</dbReference>
<dbReference type="PANTHER" id="PTHR43076:SF1">
    <property type="entry name" value="LIPOYL SYNTHASE 2"/>
    <property type="match status" value="1"/>
</dbReference>
<dbReference type="Pfam" id="PF19288">
    <property type="entry name" value="CofH_C"/>
    <property type="match status" value="1"/>
</dbReference>
<dbReference type="Pfam" id="PF04055">
    <property type="entry name" value="Radical_SAM"/>
    <property type="match status" value="1"/>
</dbReference>
<dbReference type="PIRSF" id="PIRSF004762">
    <property type="entry name" value="CHP00423"/>
    <property type="match status" value="1"/>
</dbReference>
<dbReference type="SFLD" id="SFLDF00293">
    <property type="entry name" value="((2_3_4_5-tetrahydroxypentyl)a"/>
    <property type="match status" value="1"/>
</dbReference>
<dbReference type="SFLD" id="SFLDG01388">
    <property type="entry name" value="7_8-didemethyl-8-hydroxy-5-dea"/>
    <property type="match status" value="1"/>
</dbReference>
<dbReference type="SFLD" id="SFLDF00343">
    <property type="entry name" value="aminofutalosine_synthase_(mqnE"/>
    <property type="match status" value="1"/>
</dbReference>
<dbReference type="SFLD" id="SFLDF00342">
    <property type="entry name" value="cyclic_dehypoxanthine_futalosi"/>
    <property type="match status" value="1"/>
</dbReference>
<dbReference type="SFLD" id="SFLDG01389">
    <property type="entry name" value="menaquinone_synthsis_involved"/>
    <property type="match status" value="1"/>
</dbReference>
<dbReference type="SFLD" id="SFLDS00029">
    <property type="entry name" value="Radical_SAM"/>
    <property type="match status" value="1"/>
</dbReference>
<dbReference type="SMART" id="SM00729">
    <property type="entry name" value="Elp3"/>
    <property type="match status" value="1"/>
</dbReference>
<dbReference type="SUPFAM" id="SSF102114">
    <property type="entry name" value="Radical SAM enzymes"/>
    <property type="match status" value="1"/>
</dbReference>
<dbReference type="PROSITE" id="PS51918">
    <property type="entry name" value="RADICAL_SAM"/>
    <property type="match status" value="1"/>
</dbReference>
<proteinExistence type="inferred from homology"/>
<keyword id="KW-0004">4Fe-4S</keyword>
<keyword id="KW-0408">Iron</keyword>
<keyword id="KW-0411">Iron-sulfur</keyword>
<keyword id="KW-0479">Metal-binding</keyword>
<keyword id="KW-1185">Reference proteome</keyword>
<keyword id="KW-0949">S-adenosyl-L-methionine</keyword>
<keyword id="KW-0808">Transferase</keyword>
<feature type="chain" id="PRO_0000141719" description="5-amino-6-(D-ribitylamino)uracil--L-tyrosine 4-hydroxyphenyl transferase">
    <location>
        <begin position="1"/>
        <end position="369"/>
    </location>
</feature>
<feature type="domain" description="Radical SAM core" evidence="2">
    <location>
        <begin position="56"/>
        <end position="292"/>
    </location>
</feature>
<feature type="binding site" evidence="1">
    <location>
        <position position="70"/>
    </location>
    <ligand>
        <name>[4Fe-4S] cluster</name>
        <dbReference type="ChEBI" id="CHEBI:49883"/>
        <note>4Fe-4S-S-AdoMet</note>
    </ligand>
</feature>
<feature type="binding site" evidence="1">
    <location>
        <position position="74"/>
    </location>
    <ligand>
        <name>[4Fe-4S] cluster</name>
        <dbReference type="ChEBI" id="CHEBI:49883"/>
        <note>4Fe-4S-S-AdoMet</note>
    </ligand>
</feature>
<feature type="binding site" evidence="1">
    <location>
        <position position="77"/>
    </location>
    <ligand>
        <name>[4Fe-4S] cluster</name>
        <dbReference type="ChEBI" id="CHEBI:49883"/>
        <note>4Fe-4S-S-AdoMet</note>
    </ligand>
</feature>